<evidence type="ECO:0000250" key="1">
    <source>
        <dbReference type="UniProtKB" id="Q8NC54"/>
    </source>
</evidence>
<evidence type="ECO:0000255" key="2"/>
<evidence type="ECO:0000256" key="3">
    <source>
        <dbReference type="SAM" id="MobiDB-lite"/>
    </source>
</evidence>
<evidence type="ECO:0000305" key="4"/>
<evidence type="ECO:0007744" key="5">
    <source>
    </source>
</evidence>
<protein>
    <recommendedName>
        <fullName>Keratinocyte-associated transmembrane protein 2</fullName>
    </recommendedName>
</protein>
<accession>Q8K201</accession>
<accession>Q5SVC5</accession>
<accession>Q922L7</accession>
<accession>Q9CVN1</accession>
<reference key="1">
    <citation type="journal article" date="2009" name="PLoS Biol.">
        <title>Lineage-specific biology revealed by a finished genome assembly of the mouse.</title>
        <authorList>
            <person name="Church D.M."/>
            <person name="Goodstadt L."/>
            <person name="Hillier L.W."/>
            <person name="Zody M.C."/>
            <person name="Goldstein S."/>
            <person name="She X."/>
            <person name="Bult C.J."/>
            <person name="Agarwala R."/>
            <person name="Cherry J.L."/>
            <person name="DiCuccio M."/>
            <person name="Hlavina W."/>
            <person name="Kapustin Y."/>
            <person name="Meric P."/>
            <person name="Maglott D."/>
            <person name="Birtle Z."/>
            <person name="Marques A.C."/>
            <person name="Graves T."/>
            <person name="Zhou S."/>
            <person name="Teague B."/>
            <person name="Potamousis K."/>
            <person name="Churas C."/>
            <person name="Place M."/>
            <person name="Herschleb J."/>
            <person name="Runnheim R."/>
            <person name="Forrest D."/>
            <person name="Amos-Landgraf J."/>
            <person name="Schwartz D.C."/>
            <person name="Cheng Z."/>
            <person name="Lindblad-Toh K."/>
            <person name="Eichler E.E."/>
            <person name="Ponting C.P."/>
        </authorList>
    </citation>
    <scope>NUCLEOTIDE SEQUENCE [LARGE SCALE GENOMIC DNA]</scope>
    <source>
        <strain>C57BL/6J</strain>
    </source>
</reference>
<reference key="2">
    <citation type="journal article" date="2004" name="Genome Res.">
        <title>The status, quality, and expansion of the NIH full-length cDNA project: the Mammalian Gene Collection (MGC).</title>
        <authorList>
            <consortium name="The MGC Project Team"/>
        </authorList>
    </citation>
    <scope>NUCLEOTIDE SEQUENCE [LARGE SCALE MRNA]</scope>
    <source>
        <strain>FVB/N</strain>
        <tissue>Mammary tumor</tissue>
    </source>
</reference>
<reference key="3">
    <citation type="journal article" date="2005" name="Science">
        <title>The transcriptional landscape of the mammalian genome.</title>
        <authorList>
            <person name="Carninci P."/>
            <person name="Kasukawa T."/>
            <person name="Katayama S."/>
            <person name="Gough J."/>
            <person name="Frith M.C."/>
            <person name="Maeda N."/>
            <person name="Oyama R."/>
            <person name="Ravasi T."/>
            <person name="Lenhard B."/>
            <person name="Wells C."/>
            <person name="Kodzius R."/>
            <person name="Shimokawa K."/>
            <person name="Bajic V.B."/>
            <person name="Brenner S.E."/>
            <person name="Batalov S."/>
            <person name="Forrest A.R."/>
            <person name="Zavolan M."/>
            <person name="Davis M.J."/>
            <person name="Wilming L.G."/>
            <person name="Aidinis V."/>
            <person name="Allen J.E."/>
            <person name="Ambesi-Impiombato A."/>
            <person name="Apweiler R."/>
            <person name="Aturaliya R.N."/>
            <person name="Bailey T.L."/>
            <person name="Bansal M."/>
            <person name="Baxter L."/>
            <person name="Beisel K.W."/>
            <person name="Bersano T."/>
            <person name="Bono H."/>
            <person name="Chalk A.M."/>
            <person name="Chiu K.P."/>
            <person name="Choudhary V."/>
            <person name="Christoffels A."/>
            <person name="Clutterbuck D.R."/>
            <person name="Crowe M.L."/>
            <person name="Dalla E."/>
            <person name="Dalrymple B.P."/>
            <person name="de Bono B."/>
            <person name="Della Gatta G."/>
            <person name="di Bernardo D."/>
            <person name="Down T."/>
            <person name="Engstrom P."/>
            <person name="Fagiolini M."/>
            <person name="Faulkner G."/>
            <person name="Fletcher C.F."/>
            <person name="Fukushima T."/>
            <person name="Furuno M."/>
            <person name="Futaki S."/>
            <person name="Gariboldi M."/>
            <person name="Georgii-Hemming P."/>
            <person name="Gingeras T.R."/>
            <person name="Gojobori T."/>
            <person name="Green R.E."/>
            <person name="Gustincich S."/>
            <person name="Harbers M."/>
            <person name="Hayashi Y."/>
            <person name="Hensch T.K."/>
            <person name="Hirokawa N."/>
            <person name="Hill D."/>
            <person name="Huminiecki L."/>
            <person name="Iacono M."/>
            <person name="Ikeo K."/>
            <person name="Iwama A."/>
            <person name="Ishikawa T."/>
            <person name="Jakt M."/>
            <person name="Kanapin A."/>
            <person name="Katoh M."/>
            <person name="Kawasawa Y."/>
            <person name="Kelso J."/>
            <person name="Kitamura H."/>
            <person name="Kitano H."/>
            <person name="Kollias G."/>
            <person name="Krishnan S.P."/>
            <person name="Kruger A."/>
            <person name="Kummerfeld S.K."/>
            <person name="Kurochkin I.V."/>
            <person name="Lareau L.F."/>
            <person name="Lazarevic D."/>
            <person name="Lipovich L."/>
            <person name="Liu J."/>
            <person name="Liuni S."/>
            <person name="McWilliam S."/>
            <person name="Madan Babu M."/>
            <person name="Madera M."/>
            <person name="Marchionni L."/>
            <person name="Matsuda H."/>
            <person name="Matsuzawa S."/>
            <person name="Miki H."/>
            <person name="Mignone F."/>
            <person name="Miyake S."/>
            <person name="Morris K."/>
            <person name="Mottagui-Tabar S."/>
            <person name="Mulder N."/>
            <person name="Nakano N."/>
            <person name="Nakauchi H."/>
            <person name="Ng P."/>
            <person name="Nilsson R."/>
            <person name="Nishiguchi S."/>
            <person name="Nishikawa S."/>
            <person name="Nori F."/>
            <person name="Ohara O."/>
            <person name="Okazaki Y."/>
            <person name="Orlando V."/>
            <person name="Pang K.C."/>
            <person name="Pavan W.J."/>
            <person name="Pavesi G."/>
            <person name="Pesole G."/>
            <person name="Petrovsky N."/>
            <person name="Piazza S."/>
            <person name="Reed J."/>
            <person name="Reid J.F."/>
            <person name="Ring B.Z."/>
            <person name="Ringwald M."/>
            <person name="Rost B."/>
            <person name="Ruan Y."/>
            <person name="Salzberg S.L."/>
            <person name="Sandelin A."/>
            <person name="Schneider C."/>
            <person name="Schoenbach C."/>
            <person name="Sekiguchi K."/>
            <person name="Semple C.A."/>
            <person name="Seno S."/>
            <person name="Sessa L."/>
            <person name="Sheng Y."/>
            <person name="Shibata Y."/>
            <person name="Shimada H."/>
            <person name="Shimada K."/>
            <person name="Silva D."/>
            <person name="Sinclair B."/>
            <person name="Sperling S."/>
            <person name="Stupka E."/>
            <person name="Sugiura K."/>
            <person name="Sultana R."/>
            <person name="Takenaka Y."/>
            <person name="Taki K."/>
            <person name="Tammoja K."/>
            <person name="Tan S.L."/>
            <person name="Tang S."/>
            <person name="Taylor M.S."/>
            <person name="Tegner J."/>
            <person name="Teichmann S.A."/>
            <person name="Ueda H.R."/>
            <person name="van Nimwegen E."/>
            <person name="Verardo R."/>
            <person name="Wei C.L."/>
            <person name="Yagi K."/>
            <person name="Yamanishi H."/>
            <person name="Zabarovsky E."/>
            <person name="Zhu S."/>
            <person name="Zimmer A."/>
            <person name="Hide W."/>
            <person name="Bult C."/>
            <person name="Grimmond S.M."/>
            <person name="Teasdale R.D."/>
            <person name="Liu E.T."/>
            <person name="Brusic V."/>
            <person name="Quackenbush J."/>
            <person name="Wahlestedt C."/>
            <person name="Mattick J.S."/>
            <person name="Hume D.A."/>
            <person name="Kai C."/>
            <person name="Sasaki D."/>
            <person name="Tomaru Y."/>
            <person name="Fukuda S."/>
            <person name="Kanamori-Katayama M."/>
            <person name="Suzuki M."/>
            <person name="Aoki J."/>
            <person name="Arakawa T."/>
            <person name="Iida J."/>
            <person name="Imamura K."/>
            <person name="Itoh M."/>
            <person name="Kato T."/>
            <person name="Kawaji H."/>
            <person name="Kawagashira N."/>
            <person name="Kawashima T."/>
            <person name="Kojima M."/>
            <person name="Kondo S."/>
            <person name="Konno H."/>
            <person name="Nakano K."/>
            <person name="Ninomiya N."/>
            <person name="Nishio T."/>
            <person name="Okada M."/>
            <person name="Plessy C."/>
            <person name="Shibata K."/>
            <person name="Shiraki T."/>
            <person name="Suzuki S."/>
            <person name="Tagami M."/>
            <person name="Waki K."/>
            <person name="Watahiki A."/>
            <person name="Okamura-Oho Y."/>
            <person name="Suzuki H."/>
            <person name="Kawai J."/>
            <person name="Hayashizaki Y."/>
        </authorList>
    </citation>
    <scope>NUCLEOTIDE SEQUENCE [LARGE SCALE MRNA] OF 34-259</scope>
    <source>
        <strain>C57BL/6J</strain>
        <tissue>Testis</tissue>
    </source>
</reference>
<reference key="4">
    <citation type="journal article" date="2010" name="Cell">
        <title>A tissue-specific atlas of mouse protein phosphorylation and expression.</title>
        <authorList>
            <person name="Huttlin E.L."/>
            <person name="Jedrychowski M.P."/>
            <person name="Elias J.E."/>
            <person name="Goswami T."/>
            <person name="Rad R."/>
            <person name="Beausoleil S.A."/>
            <person name="Villen J."/>
            <person name="Haas W."/>
            <person name="Sowa M.E."/>
            <person name="Gygi S.P."/>
        </authorList>
    </citation>
    <scope>PHOSPHORYLATION [LARGE SCALE ANALYSIS] AT SER-165</scope>
    <scope>IDENTIFICATION BY MASS SPECTROMETRY [LARGE SCALE ANALYSIS]</scope>
    <source>
        <tissue>Kidney</tissue>
    </source>
</reference>
<proteinExistence type="evidence at protein level"/>
<dbReference type="EMBL" id="AL645589">
    <property type="protein sequence ID" value="CAI24940.1"/>
    <property type="status" value="ALT_SEQ"/>
    <property type="molecule type" value="Genomic_DNA"/>
</dbReference>
<dbReference type="EMBL" id="BC006957">
    <property type="protein sequence ID" value="AAH06957.1"/>
    <property type="molecule type" value="mRNA"/>
</dbReference>
<dbReference type="EMBL" id="BC034829">
    <property type="protein sequence ID" value="AAH34829.2"/>
    <property type="molecule type" value="mRNA"/>
</dbReference>
<dbReference type="EMBL" id="AK007314">
    <property type="protein sequence ID" value="BAB24951.1"/>
    <property type="molecule type" value="mRNA"/>
</dbReference>
<dbReference type="CCDS" id="CCDS24672.1"/>
<dbReference type="RefSeq" id="NP_694757.1">
    <property type="nucleotide sequence ID" value="NM_153117.2"/>
</dbReference>
<dbReference type="BioGRID" id="229461">
    <property type="interactions" value="3"/>
</dbReference>
<dbReference type="FunCoup" id="Q8K201">
    <property type="interactions" value="119"/>
</dbReference>
<dbReference type="STRING" id="10090.ENSMUSP00000048441"/>
<dbReference type="GlyCosmos" id="Q8K201">
    <property type="glycosylation" value="2 sites, No reported glycans"/>
</dbReference>
<dbReference type="GlyGen" id="Q8K201">
    <property type="glycosylation" value="4 sites, 2 N-linked glycans (2 sites)"/>
</dbReference>
<dbReference type="iPTMnet" id="Q8K201"/>
<dbReference type="PhosphoSitePlus" id="Q8K201"/>
<dbReference type="SwissPalm" id="Q8K201"/>
<dbReference type="jPOST" id="Q8K201"/>
<dbReference type="PaxDb" id="10090-ENSMUSP00000048441"/>
<dbReference type="ProteomicsDB" id="269209"/>
<dbReference type="Antibodypedia" id="49872">
    <property type="antibodies" value="64 antibodies from 15 providers"/>
</dbReference>
<dbReference type="DNASU" id="213673"/>
<dbReference type="Ensembl" id="ENSMUST00000036952.5">
    <property type="protein sequence ID" value="ENSMUSP00000048441.5"/>
    <property type="gene ID" value="ENSMUSG00000036275.14"/>
</dbReference>
<dbReference type="GeneID" id="213673"/>
<dbReference type="KEGG" id="mmu:213673"/>
<dbReference type="UCSC" id="uc007ivn.1">
    <property type="organism name" value="mouse"/>
</dbReference>
<dbReference type="AGR" id="MGI:2654705"/>
<dbReference type="MGI" id="MGI:2654705">
    <property type="gene designation" value="9530068E07Rik"/>
</dbReference>
<dbReference type="VEuPathDB" id="HostDB:ENSMUSG00000036275"/>
<dbReference type="eggNOG" id="ENOG502S2NF">
    <property type="taxonomic scope" value="Eukaryota"/>
</dbReference>
<dbReference type="GeneTree" id="ENSGT00440000037499"/>
<dbReference type="HOGENOM" id="CLU_091732_0_0_1"/>
<dbReference type="InParanoid" id="Q8K201"/>
<dbReference type="OMA" id="KIFLMVQ"/>
<dbReference type="OrthoDB" id="5846619at2759"/>
<dbReference type="PhylomeDB" id="Q8K201"/>
<dbReference type="TreeFam" id="TF332514"/>
<dbReference type="BioGRID-ORCS" id="213673">
    <property type="hits" value="2 hits in 78 CRISPR screens"/>
</dbReference>
<dbReference type="ChiTaRS" id="9530068E07Rik">
    <property type="organism name" value="mouse"/>
</dbReference>
<dbReference type="PRO" id="PR:Q8K201"/>
<dbReference type="Proteomes" id="UP000000589">
    <property type="component" value="Chromosome 11"/>
</dbReference>
<dbReference type="RNAct" id="Q8K201">
    <property type="molecule type" value="protein"/>
</dbReference>
<dbReference type="Bgee" id="ENSMUSG00000036275">
    <property type="expression patterns" value="Expressed in stroma of bone marrow and 263 other cell types or tissues"/>
</dbReference>
<dbReference type="ExpressionAtlas" id="Q8K201">
    <property type="expression patterns" value="baseline and differential"/>
</dbReference>
<dbReference type="GO" id="GO:0016020">
    <property type="term" value="C:membrane"/>
    <property type="evidence" value="ECO:0007669"/>
    <property type="project" value="UniProtKB-SubCell"/>
</dbReference>
<dbReference type="InterPro" id="IPR037645">
    <property type="entry name" value="KCT2"/>
</dbReference>
<dbReference type="PANTHER" id="PTHR16502">
    <property type="entry name" value="KERATINOCYTE-ASSOCIATED TRANSMEMBRANE PROTEIN 2"/>
    <property type="match status" value="1"/>
</dbReference>
<dbReference type="PANTHER" id="PTHR16502:SF0">
    <property type="entry name" value="KERATINOCYTE-ASSOCIATED TRANSMEMBRANE PROTEIN 2"/>
    <property type="match status" value="1"/>
</dbReference>
<dbReference type="Pfam" id="PF17818">
    <property type="entry name" value="KCT2"/>
    <property type="match status" value="1"/>
</dbReference>
<sequence>MAASALGRMCGAAREKLSPGPGARGLGALARSLVLALLLVPVLCSDRSENPPNNATVSSPVVVTAPGNHTSPSVSQISTTLSPASAEKSGSSSAAPTPTAAPSAPEEEADSNEDPSMEEEDLLALNSSPATGKDTLDNGDYGEPDYDWTTNPRDEEPEDINIAISKESRRFRGFQDSVEVVKLPPPNREDSHFFFHLLIFAFCAAVVYVTYHNKRKIFLLVQSRKWRDGLCSKTVEYHRLDQNVNEAMPSLKITNDYIF</sequence>
<name>KCT2_MOUSE</name>
<feature type="signal peptide" evidence="2">
    <location>
        <begin position="1"/>
        <end position="44"/>
    </location>
</feature>
<feature type="chain" id="PRO_0000019580" description="Keratinocyte-associated transmembrane protein 2">
    <location>
        <begin position="45"/>
        <end position="259"/>
    </location>
</feature>
<feature type="topological domain" description="Extracellular" evidence="2">
    <location>
        <begin position="45"/>
        <end position="190"/>
    </location>
</feature>
<feature type="transmembrane region" description="Helical" evidence="2">
    <location>
        <begin position="191"/>
        <end position="211"/>
    </location>
</feature>
<feature type="topological domain" description="Cytoplasmic" evidence="2">
    <location>
        <begin position="212"/>
        <end position="259"/>
    </location>
</feature>
<feature type="region of interest" description="Disordered" evidence="3">
    <location>
        <begin position="47"/>
        <end position="155"/>
    </location>
</feature>
<feature type="compositionally biased region" description="Polar residues" evidence="3">
    <location>
        <begin position="50"/>
        <end position="81"/>
    </location>
</feature>
<feature type="compositionally biased region" description="Low complexity" evidence="3">
    <location>
        <begin position="82"/>
        <end position="104"/>
    </location>
</feature>
<feature type="compositionally biased region" description="Acidic residues" evidence="3">
    <location>
        <begin position="105"/>
        <end position="122"/>
    </location>
</feature>
<feature type="modified residue" description="Phosphoserine" evidence="5">
    <location>
        <position position="165"/>
    </location>
</feature>
<feature type="modified residue" description="Phosphoserine" evidence="1">
    <location>
        <position position="223"/>
    </location>
</feature>
<feature type="modified residue" description="Phosphoserine" evidence="1">
    <location>
        <position position="250"/>
    </location>
</feature>
<feature type="glycosylation site" description="N-linked (GlcNAc...) asparagine" evidence="2">
    <location>
        <position position="54"/>
    </location>
</feature>
<feature type="glycosylation site" description="N-linked (GlcNAc...) asparagine" evidence="2">
    <location>
        <position position="68"/>
    </location>
</feature>
<feature type="sequence conflict" description="In Ref. 3; BAB24951." evidence="4" ref="3">
    <original>V</original>
    <variation>R</variation>
    <location>
        <position position="34"/>
    </location>
</feature>
<feature type="sequence conflict" description="In Ref. 3; BAB24951." evidence="4" ref="3">
    <original>N</original>
    <variation>Y</variation>
    <location>
        <position position="151"/>
    </location>
</feature>
<keyword id="KW-0325">Glycoprotein</keyword>
<keyword id="KW-0472">Membrane</keyword>
<keyword id="KW-0597">Phosphoprotein</keyword>
<keyword id="KW-1185">Reference proteome</keyword>
<keyword id="KW-0732">Signal</keyword>
<keyword id="KW-0812">Transmembrane</keyword>
<keyword id="KW-1133">Transmembrane helix</keyword>
<comment type="subcellular location">
    <subcellularLocation>
        <location evidence="4">Membrane</location>
        <topology evidence="4">Single-pass type I membrane protein</topology>
    </subcellularLocation>
</comment>
<comment type="sequence caution" evidence="4">
    <conflict type="erroneous gene model prediction">
        <sequence resource="EMBL-CDS" id="CAI24940"/>
    </conflict>
</comment>
<organism>
    <name type="scientific">Mus musculus</name>
    <name type="common">Mouse</name>
    <dbReference type="NCBI Taxonomy" id="10090"/>
    <lineage>
        <taxon>Eukaryota</taxon>
        <taxon>Metazoa</taxon>
        <taxon>Chordata</taxon>
        <taxon>Craniata</taxon>
        <taxon>Vertebrata</taxon>
        <taxon>Euteleostomi</taxon>
        <taxon>Mammalia</taxon>
        <taxon>Eutheria</taxon>
        <taxon>Euarchontoglires</taxon>
        <taxon>Glires</taxon>
        <taxon>Rodentia</taxon>
        <taxon>Myomorpha</taxon>
        <taxon>Muroidea</taxon>
        <taxon>Muridae</taxon>
        <taxon>Murinae</taxon>
        <taxon>Mus</taxon>
        <taxon>Mus</taxon>
    </lineage>
</organism>
<gene>
    <name type="primary">Kct2</name>
</gene>